<comment type="function">
    <text evidence="1">Catalyzes the phosphorolysis of diverse nucleosides, yielding D-ribose 1-phosphate and the respective free bases. Can use uridine, adenosine, guanosine, cytidine, thymidine, inosine and xanthosine as substrates. Also catalyzes the reverse reactions.</text>
</comment>
<comment type="catalytic activity">
    <reaction evidence="1">
        <text>a purine D-ribonucleoside + phosphate = a purine nucleobase + alpha-D-ribose 1-phosphate</text>
        <dbReference type="Rhea" id="RHEA:19805"/>
        <dbReference type="ChEBI" id="CHEBI:26386"/>
        <dbReference type="ChEBI" id="CHEBI:43474"/>
        <dbReference type="ChEBI" id="CHEBI:57720"/>
        <dbReference type="ChEBI" id="CHEBI:142355"/>
        <dbReference type="EC" id="2.4.2.1"/>
    </reaction>
</comment>
<comment type="catalytic activity">
    <reaction evidence="1">
        <text>adenosine + phosphate = alpha-D-ribose 1-phosphate + adenine</text>
        <dbReference type="Rhea" id="RHEA:27642"/>
        <dbReference type="ChEBI" id="CHEBI:16335"/>
        <dbReference type="ChEBI" id="CHEBI:16708"/>
        <dbReference type="ChEBI" id="CHEBI:43474"/>
        <dbReference type="ChEBI" id="CHEBI:57720"/>
        <dbReference type="EC" id="2.4.2.1"/>
    </reaction>
</comment>
<comment type="catalytic activity">
    <reaction evidence="1">
        <text>cytidine + phosphate = cytosine + alpha-D-ribose 1-phosphate</text>
        <dbReference type="Rhea" id="RHEA:52540"/>
        <dbReference type="ChEBI" id="CHEBI:16040"/>
        <dbReference type="ChEBI" id="CHEBI:17562"/>
        <dbReference type="ChEBI" id="CHEBI:43474"/>
        <dbReference type="ChEBI" id="CHEBI:57720"/>
        <dbReference type="EC" id="2.4.2.2"/>
    </reaction>
</comment>
<comment type="catalytic activity">
    <reaction evidence="1">
        <text>guanosine + phosphate = alpha-D-ribose 1-phosphate + guanine</text>
        <dbReference type="Rhea" id="RHEA:13233"/>
        <dbReference type="ChEBI" id="CHEBI:16235"/>
        <dbReference type="ChEBI" id="CHEBI:16750"/>
        <dbReference type="ChEBI" id="CHEBI:43474"/>
        <dbReference type="ChEBI" id="CHEBI:57720"/>
        <dbReference type="EC" id="2.4.2.1"/>
    </reaction>
</comment>
<comment type="catalytic activity">
    <reaction evidence="1">
        <text>inosine + phosphate = alpha-D-ribose 1-phosphate + hypoxanthine</text>
        <dbReference type="Rhea" id="RHEA:27646"/>
        <dbReference type="ChEBI" id="CHEBI:17368"/>
        <dbReference type="ChEBI" id="CHEBI:17596"/>
        <dbReference type="ChEBI" id="CHEBI:43474"/>
        <dbReference type="ChEBI" id="CHEBI:57720"/>
        <dbReference type="EC" id="2.4.2.1"/>
    </reaction>
</comment>
<comment type="catalytic activity">
    <reaction evidence="1">
        <text>thymidine + phosphate = 2-deoxy-alpha-D-ribose 1-phosphate + thymine</text>
        <dbReference type="Rhea" id="RHEA:16037"/>
        <dbReference type="ChEBI" id="CHEBI:17748"/>
        <dbReference type="ChEBI" id="CHEBI:17821"/>
        <dbReference type="ChEBI" id="CHEBI:43474"/>
        <dbReference type="ChEBI" id="CHEBI:57259"/>
        <dbReference type="EC" id="2.4.2.2"/>
    </reaction>
</comment>
<comment type="catalytic activity">
    <reaction evidence="1">
        <text>uridine + phosphate = alpha-D-ribose 1-phosphate + uracil</text>
        <dbReference type="Rhea" id="RHEA:24388"/>
        <dbReference type="ChEBI" id="CHEBI:16704"/>
        <dbReference type="ChEBI" id="CHEBI:17568"/>
        <dbReference type="ChEBI" id="CHEBI:43474"/>
        <dbReference type="ChEBI" id="CHEBI:57720"/>
        <dbReference type="EC" id="2.4.2.2"/>
    </reaction>
</comment>
<comment type="catalytic activity">
    <reaction evidence="1">
        <text>xanthosine + phosphate = alpha-D-ribose 1-phosphate + xanthine</text>
        <dbReference type="Rhea" id="RHEA:27638"/>
        <dbReference type="ChEBI" id="CHEBI:17712"/>
        <dbReference type="ChEBI" id="CHEBI:18107"/>
        <dbReference type="ChEBI" id="CHEBI:43474"/>
        <dbReference type="ChEBI" id="CHEBI:57720"/>
        <dbReference type="EC" id="2.4.2.1"/>
    </reaction>
</comment>
<comment type="similarity">
    <text evidence="1">Belongs to the nucleoside phosphorylase PpnP family.</text>
</comment>
<keyword id="KW-0328">Glycosyltransferase</keyword>
<keyword id="KW-0808">Transferase</keyword>
<name>PPNP_SALPC</name>
<organism>
    <name type="scientific">Salmonella paratyphi C (strain RKS4594)</name>
    <dbReference type="NCBI Taxonomy" id="476213"/>
    <lineage>
        <taxon>Bacteria</taxon>
        <taxon>Pseudomonadati</taxon>
        <taxon>Pseudomonadota</taxon>
        <taxon>Gammaproteobacteria</taxon>
        <taxon>Enterobacterales</taxon>
        <taxon>Enterobacteriaceae</taxon>
        <taxon>Salmonella</taxon>
    </lineage>
</organism>
<sequence>MLQSNEYFSGKVKSIGFTSSSTGRASVGVMAEGEYTFGTAEPEEMTVVSGALKVLLPGTVEWKVYTAGEVFNVPVHSEFHLQVAEPTSYLCRYL</sequence>
<protein>
    <recommendedName>
        <fullName evidence="1">Pyrimidine/purine nucleoside phosphorylase</fullName>
        <ecNumber evidence="1">2.4.2.1</ecNumber>
        <ecNumber evidence="1">2.4.2.2</ecNumber>
    </recommendedName>
    <alternativeName>
        <fullName evidence="1">Adenosine phosphorylase</fullName>
    </alternativeName>
    <alternativeName>
        <fullName evidence="1">Cytidine phosphorylase</fullName>
    </alternativeName>
    <alternativeName>
        <fullName evidence="1">Guanosine phosphorylase</fullName>
    </alternativeName>
    <alternativeName>
        <fullName evidence="1">Inosine phosphorylase</fullName>
    </alternativeName>
    <alternativeName>
        <fullName evidence="1">Thymidine phosphorylase</fullName>
    </alternativeName>
    <alternativeName>
        <fullName evidence="1">Uridine phosphorylase</fullName>
    </alternativeName>
    <alternativeName>
        <fullName evidence="1">Xanthosine phosphorylase</fullName>
    </alternativeName>
</protein>
<accession>C0Q7R4</accession>
<gene>
    <name evidence="1" type="primary">ppnP</name>
    <name type="ordered locus">SPC_0401</name>
</gene>
<proteinExistence type="inferred from homology"/>
<reference key="1">
    <citation type="journal article" date="2009" name="PLoS ONE">
        <title>Salmonella paratyphi C: genetic divergence from Salmonella choleraesuis and pathogenic convergence with Salmonella typhi.</title>
        <authorList>
            <person name="Liu W.-Q."/>
            <person name="Feng Y."/>
            <person name="Wang Y."/>
            <person name="Zou Q.-H."/>
            <person name="Chen F."/>
            <person name="Guo J.-T."/>
            <person name="Peng Y.-H."/>
            <person name="Jin Y."/>
            <person name="Li Y.-G."/>
            <person name="Hu S.-N."/>
            <person name="Johnston R.N."/>
            <person name="Liu G.-R."/>
            <person name="Liu S.-L."/>
        </authorList>
    </citation>
    <scope>NUCLEOTIDE SEQUENCE [LARGE SCALE GENOMIC DNA]</scope>
    <source>
        <strain>RKS4594</strain>
    </source>
</reference>
<evidence type="ECO:0000255" key="1">
    <source>
        <dbReference type="HAMAP-Rule" id="MF_01537"/>
    </source>
</evidence>
<dbReference type="EC" id="2.4.2.1" evidence="1"/>
<dbReference type="EC" id="2.4.2.2" evidence="1"/>
<dbReference type="EMBL" id="CP000857">
    <property type="protein sequence ID" value="ACN44584.1"/>
    <property type="molecule type" value="Genomic_DNA"/>
</dbReference>
<dbReference type="RefSeq" id="WP_000941954.1">
    <property type="nucleotide sequence ID" value="NC_012125.1"/>
</dbReference>
<dbReference type="SMR" id="C0Q7R4"/>
<dbReference type="KEGG" id="sei:SPC_0401"/>
<dbReference type="HOGENOM" id="CLU_157874_0_0_6"/>
<dbReference type="Proteomes" id="UP000001599">
    <property type="component" value="Chromosome"/>
</dbReference>
<dbReference type="GO" id="GO:0005829">
    <property type="term" value="C:cytosol"/>
    <property type="evidence" value="ECO:0007669"/>
    <property type="project" value="TreeGrafter"/>
</dbReference>
<dbReference type="GO" id="GO:0047975">
    <property type="term" value="F:guanosine phosphorylase activity"/>
    <property type="evidence" value="ECO:0007669"/>
    <property type="project" value="UniProtKB-EC"/>
</dbReference>
<dbReference type="GO" id="GO:0004731">
    <property type="term" value="F:purine-nucleoside phosphorylase activity"/>
    <property type="evidence" value="ECO:0007669"/>
    <property type="project" value="UniProtKB-UniRule"/>
</dbReference>
<dbReference type="GO" id="GO:0009032">
    <property type="term" value="F:thymidine phosphorylase activity"/>
    <property type="evidence" value="ECO:0007669"/>
    <property type="project" value="UniProtKB-EC"/>
</dbReference>
<dbReference type="GO" id="GO:0004850">
    <property type="term" value="F:uridine phosphorylase activity"/>
    <property type="evidence" value="ECO:0007669"/>
    <property type="project" value="UniProtKB-EC"/>
</dbReference>
<dbReference type="CDD" id="cd20296">
    <property type="entry name" value="cupin_PpnP-like"/>
    <property type="match status" value="1"/>
</dbReference>
<dbReference type="FunFam" id="2.60.120.10:FF:000016">
    <property type="entry name" value="Pyrimidine/purine nucleoside phosphorylase"/>
    <property type="match status" value="1"/>
</dbReference>
<dbReference type="Gene3D" id="2.60.120.10">
    <property type="entry name" value="Jelly Rolls"/>
    <property type="match status" value="1"/>
</dbReference>
<dbReference type="HAMAP" id="MF_01537">
    <property type="entry name" value="Nucleos_phosphorylase_PpnP"/>
    <property type="match status" value="1"/>
</dbReference>
<dbReference type="InterPro" id="IPR009664">
    <property type="entry name" value="Ppnp"/>
</dbReference>
<dbReference type="InterPro" id="IPR014710">
    <property type="entry name" value="RmlC-like_jellyroll"/>
</dbReference>
<dbReference type="InterPro" id="IPR011051">
    <property type="entry name" value="RmlC_Cupin_sf"/>
</dbReference>
<dbReference type="NCBIfam" id="NF007875">
    <property type="entry name" value="PRK10579.1"/>
    <property type="match status" value="1"/>
</dbReference>
<dbReference type="PANTHER" id="PTHR36540">
    <property type="entry name" value="PYRIMIDINE/PURINE NUCLEOSIDE PHOSPHORYLASE"/>
    <property type="match status" value="1"/>
</dbReference>
<dbReference type="PANTHER" id="PTHR36540:SF1">
    <property type="entry name" value="PYRIMIDINE_PURINE NUCLEOSIDE PHOSPHORYLASE"/>
    <property type="match status" value="1"/>
</dbReference>
<dbReference type="Pfam" id="PF06865">
    <property type="entry name" value="Ppnp"/>
    <property type="match status" value="1"/>
</dbReference>
<dbReference type="SUPFAM" id="SSF51182">
    <property type="entry name" value="RmlC-like cupins"/>
    <property type="match status" value="1"/>
</dbReference>
<feature type="chain" id="PRO_1000185198" description="Pyrimidine/purine nucleoside phosphorylase">
    <location>
        <begin position="1"/>
        <end position="94"/>
    </location>
</feature>